<protein>
    <recommendedName>
        <fullName>Cell cycle checkpoint protein RAD17</fullName>
    </recommendedName>
</protein>
<gene>
    <name type="primary">RAD17</name>
</gene>
<feature type="chain" id="PRO_0000209950" description="Cell cycle checkpoint protein RAD17">
    <location>
        <begin position="1"/>
        <end position="681"/>
    </location>
</feature>
<feature type="region of interest" description="Disordered" evidence="4">
    <location>
        <begin position="42"/>
        <end position="63"/>
    </location>
</feature>
<feature type="region of interest" description="Interaction with MCM7" evidence="1">
    <location>
        <begin position="432"/>
        <end position="681"/>
    </location>
</feature>
<feature type="region of interest" description="Disordered" evidence="4">
    <location>
        <begin position="606"/>
        <end position="681"/>
    </location>
</feature>
<feature type="short sequence motif" description="RAD1-binding motif" evidence="1">
    <location>
        <begin position="17"/>
        <end position="25"/>
    </location>
</feature>
<feature type="compositionally biased region" description="Polar residues" evidence="4">
    <location>
        <begin position="631"/>
        <end position="662"/>
    </location>
</feature>
<feature type="compositionally biased region" description="Acidic residues" evidence="4">
    <location>
        <begin position="666"/>
        <end position="681"/>
    </location>
</feature>
<feature type="binding site" evidence="3">
    <location>
        <begin position="137"/>
        <end position="144"/>
    </location>
    <ligand>
        <name>ATP</name>
        <dbReference type="ChEBI" id="CHEBI:30616"/>
    </ligand>
</feature>
<feature type="modified residue" description="Phosphothreonine" evidence="2">
    <location>
        <position position="55"/>
    </location>
</feature>
<feature type="modified residue" description="Phosphoserine" evidence="1">
    <location>
        <position position="71"/>
    </location>
</feature>
<feature type="modified residue" description="Phosphoserine" evidence="1">
    <location>
        <position position="86"/>
    </location>
</feature>
<feature type="modified residue" description="Phosphoserine" evidence="1">
    <location>
        <position position="359"/>
    </location>
</feature>
<feature type="modified residue" description="Phosphothreonine" evidence="1">
    <location>
        <position position="633"/>
    </location>
</feature>
<feature type="modified residue" description="Phosphoserine" evidence="1">
    <location>
        <position position="646"/>
    </location>
</feature>
<feature type="modified residue" description="Phosphoserine" evidence="1">
    <location>
        <position position="656"/>
    </location>
</feature>
<name>RAD17_PONAB</name>
<accession>Q5R652</accession>
<sequence>MSKTFLRPKVSSTKVTDWVDPSFDDFLECRDVSTITATSLGVNNSSHRRKNGPSTLESSRFPARKRGNLSSLEQIYGLENSKEYLSENEPWVDKYKPETQHELAVHKKKIEEVETWLKAQVLERQPKQGGSILLITGPPGCGKTTTIKILSKEHGIQVQEWINPVLPDFQKDDFKGMFNTESSFHMFPYQSQIAVFKEFLLRATKYNKLQMLGDDLRTDKKIILVEDLPNQFYRDSHTLHEVLRKYVRIGRCPLIFIISDSLSGDNNQRLLFPKEIQEECSISNISFNPVAPTIMMKFLNRIVTIEANKNGGKITVPDKTSLELLCQGCSGDIRSAINSLQFSSSKGENNLWPRKKGMSLKSDAVLSKSKQRKKPDRVFENQEVQAIGGKDVSLFLFRALGKILYCKRASLTELDSPRLPSHLSEYERDTLLVEPEEVVEMSHMPGDLFNLYLHQNYIDFFMEIDDIVRASEFLSFADILSGDWNTRSLLREYSTSIATRGVMHSNKARGYAHCQGGGSSFRPLHKPQWFLINKKYRENYLAAKALFPDFCLPALCLQTQLLPYLALLTIPMRNQAQISFIQDIGRLPLKRHFGRLKMEALTDREHGMIDPDSGDEAQLNGGHSAEESLGEPTQATALETWSLPLSQNSASELPASQPQPFSAQGDMEENIIIEDYESDGT</sequence>
<proteinExistence type="evidence at transcript level"/>
<organism>
    <name type="scientific">Pongo abelii</name>
    <name type="common">Sumatran orangutan</name>
    <name type="synonym">Pongo pygmaeus abelii</name>
    <dbReference type="NCBI Taxonomy" id="9601"/>
    <lineage>
        <taxon>Eukaryota</taxon>
        <taxon>Metazoa</taxon>
        <taxon>Chordata</taxon>
        <taxon>Craniata</taxon>
        <taxon>Vertebrata</taxon>
        <taxon>Euteleostomi</taxon>
        <taxon>Mammalia</taxon>
        <taxon>Eutheria</taxon>
        <taxon>Euarchontoglires</taxon>
        <taxon>Primates</taxon>
        <taxon>Haplorrhini</taxon>
        <taxon>Catarrhini</taxon>
        <taxon>Hominidae</taxon>
        <taxon>Pongo</taxon>
    </lineage>
</organism>
<keyword id="KW-0067">ATP-binding</keyword>
<keyword id="KW-0131">Cell cycle</keyword>
<keyword id="KW-0158">Chromosome</keyword>
<keyword id="KW-0227">DNA damage</keyword>
<keyword id="KW-0547">Nucleotide-binding</keyword>
<keyword id="KW-0539">Nucleus</keyword>
<keyword id="KW-0597">Phosphoprotein</keyword>
<keyword id="KW-1185">Reference proteome</keyword>
<dbReference type="EMBL" id="CR860644">
    <property type="protein sequence ID" value="CAH92764.1"/>
    <property type="molecule type" value="mRNA"/>
</dbReference>
<dbReference type="RefSeq" id="NP_001129002.1">
    <property type="nucleotide sequence ID" value="NM_001135530.1"/>
</dbReference>
<dbReference type="SMR" id="Q5R652"/>
<dbReference type="FunCoup" id="Q5R652">
    <property type="interactions" value="3514"/>
</dbReference>
<dbReference type="STRING" id="9601.ENSPPYP00000017352"/>
<dbReference type="GeneID" id="100190842"/>
<dbReference type="KEGG" id="pon:100190842"/>
<dbReference type="CTD" id="5884"/>
<dbReference type="eggNOG" id="KOG1970">
    <property type="taxonomic scope" value="Eukaryota"/>
</dbReference>
<dbReference type="InParanoid" id="Q5R652"/>
<dbReference type="OrthoDB" id="10265971at2759"/>
<dbReference type="Proteomes" id="UP000001595">
    <property type="component" value="Unplaced"/>
</dbReference>
<dbReference type="GO" id="GO:0005634">
    <property type="term" value="C:nucleus"/>
    <property type="evidence" value="ECO:0007669"/>
    <property type="project" value="UniProtKB-SubCell"/>
</dbReference>
<dbReference type="GO" id="GO:0031389">
    <property type="term" value="C:Rad17 RFC-like complex"/>
    <property type="evidence" value="ECO:0007669"/>
    <property type="project" value="InterPro"/>
</dbReference>
<dbReference type="GO" id="GO:0035861">
    <property type="term" value="C:site of double-strand break"/>
    <property type="evidence" value="ECO:0000250"/>
    <property type="project" value="UniProtKB"/>
</dbReference>
<dbReference type="GO" id="GO:0005524">
    <property type="term" value="F:ATP binding"/>
    <property type="evidence" value="ECO:0007669"/>
    <property type="project" value="UniProtKB-KW"/>
</dbReference>
<dbReference type="GO" id="GO:0003682">
    <property type="term" value="F:chromatin binding"/>
    <property type="evidence" value="ECO:0007669"/>
    <property type="project" value="TreeGrafter"/>
</dbReference>
<dbReference type="GO" id="GO:0140463">
    <property type="term" value="F:chromatin-protein adaptor activity"/>
    <property type="evidence" value="ECO:0000250"/>
    <property type="project" value="UniProtKB"/>
</dbReference>
<dbReference type="GO" id="GO:0003689">
    <property type="term" value="F:DNA clamp loader activity"/>
    <property type="evidence" value="ECO:0007669"/>
    <property type="project" value="InterPro"/>
</dbReference>
<dbReference type="GO" id="GO:0000077">
    <property type="term" value="P:DNA damage checkpoint signaling"/>
    <property type="evidence" value="ECO:0007669"/>
    <property type="project" value="InterPro"/>
</dbReference>
<dbReference type="GO" id="GO:0006281">
    <property type="term" value="P:DNA repair"/>
    <property type="evidence" value="ECO:0007669"/>
    <property type="project" value="InterPro"/>
</dbReference>
<dbReference type="GO" id="GO:0033314">
    <property type="term" value="P:mitotic DNA replication checkpoint signaling"/>
    <property type="evidence" value="ECO:0007669"/>
    <property type="project" value="TreeGrafter"/>
</dbReference>
<dbReference type="GO" id="GO:1990166">
    <property type="term" value="P:protein localization to site of double-strand break"/>
    <property type="evidence" value="ECO:0000250"/>
    <property type="project" value="UniProtKB"/>
</dbReference>
<dbReference type="CDD" id="cd18139">
    <property type="entry name" value="HLD_clamp_RarA"/>
    <property type="match status" value="1"/>
</dbReference>
<dbReference type="FunFam" id="3.40.50.300:FF:000714">
    <property type="entry name" value="cell cycle checkpoint protein RAD17 isoform X1"/>
    <property type="match status" value="1"/>
</dbReference>
<dbReference type="Gene3D" id="3.40.50.300">
    <property type="entry name" value="P-loop containing nucleotide triphosphate hydrolases"/>
    <property type="match status" value="1"/>
</dbReference>
<dbReference type="InterPro" id="IPR004582">
    <property type="entry name" value="Checkpoint_prot_Rad17_Rad24"/>
</dbReference>
<dbReference type="InterPro" id="IPR027417">
    <property type="entry name" value="P-loop_NTPase"/>
</dbReference>
<dbReference type="InterPro" id="IPR018324">
    <property type="entry name" value="Rad17/Rad24_fun/met"/>
</dbReference>
<dbReference type="NCBIfam" id="TIGR00602">
    <property type="entry name" value="rad24"/>
    <property type="match status" value="1"/>
</dbReference>
<dbReference type="PANTHER" id="PTHR12172">
    <property type="entry name" value="CELL CYCLE CHECKPOINT PROTEIN RAD17"/>
    <property type="match status" value="1"/>
</dbReference>
<dbReference type="PANTHER" id="PTHR12172:SF0">
    <property type="entry name" value="CELL CYCLE CHECKPOINT PROTEIN RAD17"/>
    <property type="match status" value="1"/>
</dbReference>
<dbReference type="Pfam" id="PF03215">
    <property type="entry name" value="Rad17"/>
    <property type="match status" value="1"/>
</dbReference>
<dbReference type="SUPFAM" id="SSF52540">
    <property type="entry name" value="P-loop containing nucleoside triphosphate hydrolases"/>
    <property type="match status" value="1"/>
</dbReference>
<reference key="1">
    <citation type="submission" date="2004-11" db="EMBL/GenBank/DDBJ databases">
        <authorList>
            <consortium name="The German cDNA consortium"/>
        </authorList>
    </citation>
    <scope>NUCLEOTIDE SEQUENCE [LARGE SCALE MRNA]</scope>
    <source>
        <tissue>Brain cortex</tissue>
    </source>
</reference>
<comment type="function">
    <text evidence="1">Essential for sustained cell growth, maintenance of chromosomal stability, and ATR-dependent checkpoint activation upon DNA damage. Has a weak ATPase activity required for binding to chromatin. Participates in the recruitment of the 9-1-1 (RAD1-RAD9-HUS1) complex and RHNO1 onto chromatin, and in CHEK1 activation. Involved in homologous recombination by mediating recruitment of the MRN complex to DNA damage sites. May also serve as a sensor of DNA replication progression.</text>
</comment>
<comment type="subunit">
    <text evidence="1">Part of a DNA-binding complex containing RFC2, RFC3, RFC4 and RFC5. Interacts with RAD1 and RAD9 within the 9-1-1 (RAD1-RAD9-HUS1) complex. Interacts with RAD9B, POLE, SNU13 and MCM7. DNA damage promotes interaction with ATR or ATM and disrupts interaction with the 9-1-1 (RAD1-RAD9-HUS1) complex. Interacts (when phosphorylated) with NBN; promoting recruitment of the MRN complex to DNA damage sites.</text>
</comment>
<comment type="subcellular location">
    <subcellularLocation>
        <location evidence="1">Nucleus</location>
    </subcellularLocation>
    <subcellularLocation>
        <location evidence="1">Chromosome</location>
    </subcellularLocation>
    <text evidence="1">Phosphorylated form redistributes to discrete nuclear foci upon DNA damage. Localizes to DNA double-strand breaks (DSBs).</text>
</comment>
<comment type="PTM">
    <text evidence="1">Phosphorylated. Phosphorylation on Ser-646 and Ser-656 is cell cycle-regulated, enhanced by genotoxic stress, and required for activation of checkpoint signaling. Phosphorylation is mediated by ATR upon UV or replication arrest, whereas it may be mediated both by ATR and ATM upon ionizing radiation. Phosphorylation on both sites is required for interaction with RAD1 but dispensable for interaction with RFC3 or RFC4. Phosphorylation at Thr-633 by ATM in response to DNA damage promotes interaction with NBN and recruitment of the MRN complex to DNA damage sites.</text>
</comment>
<comment type="similarity">
    <text evidence="5">Belongs to the rad17/RAD24 family.</text>
</comment>
<evidence type="ECO:0000250" key="1">
    <source>
        <dbReference type="UniProtKB" id="O75943"/>
    </source>
</evidence>
<evidence type="ECO:0000250" key="2">
    <source>
        <dbReference type="UniProtKB" id="Q9XT62"/>
    </source>
</evidence>
<evidence type="ECO:0000255" key="3"/>
<evidence type="ECO:0000256" key="4">
    <source>
        <dbReference type="SAM" id="MobiDB-lite"/>
    </source>
</evidence>
<evidence type="ECO:0000305" key="5"/>